<accession>P53597</accession>
<accession>Q9BWB0</accession>
<accession>Q9UNP6</accession>
<keyword id="KW-0002">3D-structure</keyword>
<keyword id="KW-0007">Acetylation</keyword>
<keyword id="KW-0225">Disease variant</keyword>
<keyword id="KW-0436">Ligase</keyword>
<keyword id="KW-0496">Mitochondrion</keyword>
<keyword id="KW-0547">Nucleotide-binding</keyword>
<keyword id="KW-1274">Primary mitochondrial disease</keyword>
<keyword id="KW-1267">Proteomics identification</keyword>
<keyword id="KW-1185">Reference proteome</keyword>
<keyword id="KW-0809">Transit peptide</keyword>
<keyword id="KW-0816">Tricarboxylic acid cycle</keyword>
<protein>
    <recommendedName>
        <fullName evidence="3">Succinate--CoA ligase [ADP/GDP-forming] subunit alpha, mitochondrial</fullName>
        <ecNumber evidence="3">6.2.1.4</ecNumber>
        <ecNumber evidence="3">6.2.1.5</ecNumber>
    </recommendedName>
    <alternativeName>
        <fullName evidence="3">Succinyl-CoA synthetase subunit alpha</fullName>
        <shortName evidence="3">SCS-alpha</shortName>
    </alternativeName>
</protein>
<dbReference type="EC" id="6.2.1.4" evidence="3"/>
<dbReference type="EC" id="6.2.1.5" evidence="3"/>
<dbReference type="EMBL" id="AC096770">
    <property type="status" value="NOT_ANNOTATED_CDS"/>
    <property type="molecule type" value="Genomic_DNA"/>
</dbReference>
<dbReference type="EMBL" id="BC000504">
    <property type="protein sequence ID" value="AAH00504.1"/>
    <property type="status" value="ALT_INIT"/>
    <property type="molecule type" value="mRNA"/>
</dbReference>
<dbReference type="EMBL" id="AF104921">
    <property type="protein sequence ID" value="AAD17940.2"/>
    <property type="status" value="ALT_INIT"/>
    <property type="molecule type" value="mRNA"/>
</dbReference>
<dbReference type="EMBL" id="Z68204">
    <property type="protein sequence ID" value="CAA92426.1"/>
    <property type="status" value="ALT_INIT"/>
    <property type="molecule type" value="mRNA"/>
</dbReference>
<dbReference type="CCDS" id="CCDS1967.2"/>
<dbReference type="RefSeq" id="NP_003840.2">
    <property type="nucleotide sequence ID" value="NM_003849.4"/>
</dbReference>
<dbReference type="PDB" id="6G4Q">
    <property type="method" value="X-ray"/>
    <property type="resolution" value="2.59 A"/>
    <property type="chains" value="A=42-346"/>
</dbReference>
<dbReference type="PDB" id="6WCV">
    <property type="method" value="X-ray"/>
    <property type="resolution" value="1.52 A"/>
    <property type="chains" value="A=42-346"/>
</dbReference>
<dbReference type="PDB" id="7MSR">
    <property type="method" value="X-ray"/>
    <property type="resolution" value="1.58 A"/>
    <property type="chains" value="A=42-346"/>
</dbReference>
<dbReference type="PDB" id="7MSS">
    <property type="method" value="X-ray"/>
    <property type="resolution" value="1.75 A"/>
    <property type="chains" value="A=42-346"/>
</dbReference>
<dbReference type="PDB" id="7MST">
    <property type="method" value="X-ray"/>
    <property type="resolution" value="1.61 A"/>
    <property type="chains" value="A=42-346"/>
</dbReference>
<dbReference type="PDB" id="8Z02">
    <property type="method" value="X-ray"/>
    <property type="resolution" value="2.32 A"/>
    <property type="chains" value="A=42-346"/>
</dbReference>
<dbReference type="PDB" id="8Z03">
    <property type="method" value="X-ray"/>
    <property type="resolution" value="1.99 A"/>
    <property type="chains" value="A=42-346"/>
</dbReference>
<dbReference type="PDBsum" id="6G4Q"/>
<dbReference type="PDBsum" id="6WCV"/>
<dbReference type="PDBsum" id="7MSR"/>
<dbReference type="PDBsum" id="7MSS"/>
<dbReference type="PDBsum" id="7MST"/>
<dbReference type="PDBsum" id="8Z02"/>
<dbReference type="PDBsum" id="8Z03"/>
<dbReference type="SMR" id="P53597"/>
<dbReference type="BioGRID" id="114330">
    <property type="interactions" value="133"/>
</dbReference>
<dbReference type="ComplexPortal" id="CPX-6175">
    <property type="entry name" value="Mitochondrial succinyl-CoA synthetase complex, GTP-specific variant"/>
</dbReference>
<dbReference type="ComplexPortal" id="CPX-6176">
    <property type="entry name" value="Mitochondrial succinyl-CoA synthetase complex, ATP-specific variant"/>
</dbReference>
<dbReference type="CORUM" id="P53597"/>
<dbReference type="FunCoup" id="P53597">
    <property type="interactions" value="1756"/>
</dbReference>
<dbReference type="IntAct" id="P53597">
    <property type="interactions" value="35"/>
</dbReference>
<dbReference type="MINT" id="P53597"/>
<dbReference type="STRING" id="9606.ENSP00000377446"/>
<dbReference type="DrugBank" id="DB00787">
    <property type="generic name" value="Acyclovir"/>
</dbReference>
<dbReference type="GlyCosmos" id="P53597">
    <property type="glycosylation" value="1 site, 1 glycan"/>
</dbReference>
<dbReference type="GlyGen" id="P53597">
    <property type="glycosylation" value="1 site, 1 O-linked glycan (1 site)"/>
</dbReference>
<dbReference type="iPTMnet" id="P53597"/>
<dbReference type="PhosphoSitePlus" id="P53597"/>
<dbReference type="SwissPalm" id="P53597"/>
<dbReference type="BioMuta" id="SUCLG1"/>
<dbReference type="DMDM" id="223634731"/>
<dbReference type="jPOST" id="P53597"/>
<dbReference type="MassIVE" id="P53597"/>
<dbReference type="PaxDb" id="9606-ENSP00000377446"/>
<dbReference type="PeptideAtlas" id="P53597"/>
<dbReference type="ProteomicsDB" id="56587"/>
<dbReference type="Pumba" id="P53597"/>
<dbReference type="TopDownProteomics" id="P53597"/>
<dbReference type="Antibodypedia" id="47488">
    <property type="antibodies" value="120 antibodies from 29 providers"/>
</dbReference>
<dbReference type="DNASU" id="8802"/>
<dbReference type="Ensembl" id="ENST00000393868.7">
    <property type="protein sequence ID" value="ENSP00000377446.2"/>
    <property type="gene ID" value="ENSG00000163541.12"/>
</dbReference>
<dbReference type="GeneID" id="8802"/>
<dbReference type="KEGG" id="hsa:8802"/>
<dbReference type="MANE-Select" id="ENST00000393868.7">
    <property type="protein sequence ID" value="ENSP00000377446.2"/>
    <property type="RefSeq nucleotide sequence ID" value="NM_003849.4"/>
    <property type="RefSeq protein sequence ID" value="NP_003840.2"/>
</dbReference>
<dbReference type="UCSC" id="uc002son.4">
    <property type="organism name" value="human"/>
</dbReference>
<dbReference type="AGR" id="HGNC:11449"/>
<dbReference type="CTD" id="8802"/>
<dbReference type="DisGeNET" id="8802"/>
<dbReference type="GeneCards" id="SUCLG1"/>
<dbReference type="GeneReviews" id="SUCLG1"/>
<dbReference type="HGNC" id="HGNC:11449">
    <property type="gene designation" value="SUCLG1"/>
</dbReference>
<dbReference type="HPA" id="ENSG00000163541">
    <property type="expression patterns" value="Tissue enhanced (kidney)"/>
</dbReference>
<dbReference type="MalaCards" id="SUCLG1"/>
<dbReference type="MIM" id="245400">
    <property type="type" value="phenotype"/>
</dbReference>
<dbReference type="MIM" id="611224">
    <property type="type" value="gene"/>
</dbReference>
<dbReference type="neXtProt" id="NX_P53597"/>
<dbReference type="OpenTargets" id="ENSG00000163541"/>
<dbReference type="Orphanet" id="17">
    <property type="disease" value="Fatal infantile lactic acidosis with methylmalonic aciduria"/>
</dbReference>
<dbReference type="PharmGKB" id="PA36246"/>
<dbReference type="VEuPathDB" id="HostDB:ENSG00000163541"/>
<dbReference type="eggNOG" id="KOG1255">
    <property type="taxonomic scope" value="Eukaryota"/>
</dbReference>
<dbReference type="GeneTree" id="ENSGT00940000156351"/>
<dbReference type="HOGENOM" id="CLU_052104_1_0_1"/>
<dbReference type="InParanoid" id="P53597"/>
<dbReference type="OMA" id="VIICITE"/>
<dbReference type="OrthoDB" id="1664372at2759"/>
<dbReference type="PAN-GO" id="P53597">
    <property type="GO annotations" value="5 GO annotations based on evolutionary models"/>
</dbReference>
<dbReference type="PhylomeDB" id="P53597"/>
<dbReference type="TreeFam" id="TF300666"/>
<dbReference type="BioCyc" id="MetaCyc:HS08877-MONOMER"/>
<dbReference type="BRENDA" id="6.2.1.4">
    <property type="organism ID" value="2681"/>
</dbReference>
<dbReference type="BRENDA" id="6.2.1.5">
    <property type="organism ID" value="2681"/>
</dbReference>
<dbReference type="PathwayCommons" id="P53597"/>
<dbReference type="Reactome" id="R-HSA-71403">
    <property type="pathway name" value="Citric acid cycle (TCA cycle)"/>
</dbReference>
<dbReference type="SignaLink" id="P53597"/>
<dbReference type="SIGNOR" id="P53597"/>
<dbReference type="UniPathway" id="UPA00223">
    <property type="reaction ID" value="UER00999"/>
</dbReference>
<dbReference type="BioGRID-ORCS" id="8802">
    <property type="hits" value="72 hits in 1159 CRISPR screens"/>
</dbReference>
<dbReference type="CD-CODE" id="91857CE7">
    <property type="entry name" value="Nucleolus"/>
</dbReference>
<dbReference type="CD-CODE" id="FB4E32DD">
    <property type="entry name" value="Presynaptic clusters and postsynaptic densities"/>
</dbReference>
<dbReference type="ChiTaRS" id="SUCLG1">
    <property type="organism name" value="human"/>
</dbReference>
<dbReference type="GeneWiki" id="SUCLG1"/>
<dbReference type="GenomeRNAi" id="8802"/>
<dbReference type="Pharos" id="P53597">
    <property type="development level" value="Tbio"/>
</dbReference>
<dbReference type="PRO" id="PR:P53597"/>
<dbReference type="Proteomes" id="UP000005640">
    <property type="component" value="Chromosome 2"/>
</dbReference>
<dbReference type="RNAct" id="P53597">
    <property type="molecule type" value="protein"/>
</dbReference>
<dbReference type="Bgee" id="ENSG00000163541">
    <property type="expression patterns" value="Expressed in nephron tubule and 207 other cell types or tissues"/>
</dbReference>
<dbReference type="ExpressionAtlas" id="P53597">
    <property type="expression patterns" value="baseline and differential"/>
</dbReference>
<dbReference type="GO" id="GO:0005759">
    <property type="term" value="C:mitochondrial matrix"/>
    <property type="evidence" value="ECO:0000304"/>
    <property type="project" value="Reactome"/>
</dbReference>
<dbReference type="GO" id="GO:0005739">
    <property type="term" value="C:mitochondrion"/>
    <property type="evidence" value="ECO:0006056"/>
    <property type="project" value="FlyBase"/>
</dbReference>
<dbReference type="GO" id="GO:0009361">
    <property type="term" value="C:succinate-CoA ligase complex (ADP-forming)"/>
    <property type="evidence" value="ECO:0000318"/>
    <property type="project" value="GO_Central"/>
</dbReference>
<dbReference type="GO" id="GO:0045244">
    <property type="term" value="C:succinate-CoA ligase complex (GDP-forming)"/>
    <property type="evidence" value="ECO:0000353"/>
    <property type="project" value="ComplexPortal"/>
</dbReference>
<dbReference type="GO" id="GO:0000166">
    <property type="term" value="F:nucleotide binding"/>
    <property type="evidence" value="ECO:0007669"/>
    <property type="project" value="UniProtKB-KW"/>
</dbReference>
<dbReference type="GO" id="GO:0003723">
    <property type="term" value="F:RNA binding"/>
    <property type="evidence" value="ECO:0007005"/>
    <property type="project" value="UniProtKB"/>
</dbReference>
<dbReference type="GO" id="GO:0004775">
    <property type="term" value="F:succinate-CoA ligase (ADP-forming) activity"/>
    <property type="evidence" value="ECO:0000318"/>
    <property type="project" value="GO_Central"/>
</dbReference>
<dbReference type="GO" id="GO:0004776">
    <property type="term" value="F:succinate-CoA ligase (GDP-forming) activity"/>
    <property type="evidence" value="ECO:0000318"/>
    <property type="project" value="GO_Central"/>
</dbReference>
<dbReference type="GO" id="GO:1901289">
    <property type="term" value="P:succinyl-CoA catabolic process"/>
    <property type="evidence" value="ECO:0000303"/>
    <property type="project" value="ComplexPortal"/>
</dbReference>
<dbReference type="GO" id="GO:0006099">
    <property type="term" value="P:tricarboxylic acid cycle"/>
    <property type="evidence" value="ECO:0000318"/>
    <property type="project" value="GO_Central"/>
</dbReference>
<dbReference type="FunFam" id="3.40.50.720:FF:000002">
    <property type="entry name" value="Succinate--CoA ligase [ADP-forming] subunit alpha"/>
    <property type="match status" value="1"/>
</dbReference>
<dbReference type="FunFam" id="3.40.50.261:FF:000005">
    <property type="entry name" value="Succinate--CoA ligase [ADP-forming] subunit alpha, mitochondrial"/>
    <property type="match status" value="1"/>
</dbReference>
<dbReference type="Gene3D" id="3.40.50.720">
    <property type="entry name" value="NAD(P)-binding Rossmann-like Domain"/>
    <property type="match status" value="1"/>
</dbReference>
<dbReference type="Gene3D" id="3.40.50.261">
    <property type="entry name" value="Succinyl-CoA synthetase domains"/>
    <property type="match status" value="1"/>
</dbReference>
<dbReference type="HAMAP" id="MF_01988">
    <property type="entry name" value="Succ_CoA_alpha"/>
    <property type="match status" value="1"/>
</dbReference>
<dbReference type="InterPro" id="IPR017440">
    <property type="entry name" value="Cit_synth/succinyl-CoA_lig_AS"/>
</dbReference>
<dbReference type="InterPro" id="IPR033847">
    <property type="entry name" value="Citrt_syn/SCS-alpha_CS"/>
</dbReference>
<dbReference type="InterPro" id="IPR003781">
    <property type="entry name" value="CoA-bd"/>
</dbReference>
<dbReference type="InterPro" id="IPR005810">
    <property type="entry name" value="CoA_lig_alpha"/>
</dbReference>
<dbReference type="InterPro" id="IPR036291">
    <property type="entry name" value="NAD(P)-bd_dom_sf"/>
</dbReference>
<dbReference type="InterPro" id="IPR005811">
    <property type="entry name" value="SUCC_ACL_C"/>
</dbReference>
<dbReference type="InterPro" id="IPR016102">
    <property type="entry name" value="Succinyl-CoA_synth-like"/>
</dbReference>
<dbReference type="NCBIfam" id="NF004230">
    <property type="entry name" value="PRK05678.1"/>
    <property type="match status" value="1"/>
</dbReference>
<dbReference type="NCBIfam" id="TIGR01019">
    <property type="entry name" value="sucCoAalpha"/>
    <property type="match status" value="1"/>
</dbReference>
<dbReference type="PANTHER" id="PTHR11117:SF2">
    <property type="entry name" value="SUCCINATE--COA LIGASE [ADP_GDP-FORMING] SUBUNIT ALPHA, MITOCHONDRIAL"/>
    <property type="match status" value="1"/>
</dbReference>
<dbReference type="PANTHER" id="PTHR11117">
    <property type="entry name" value="SUCCINYL-COA LIGASE SUBUNIT ALPHA"/>
    <property type="match status" value="1"/>
</dbReference>
<dbReference type="Pfam" id="PF02629">
    <property type="entry name" value="CoA_binding"/>
    <property type="match status" value="1"/>
</dbReference>
<dbReference type="Pfam" id="PF00549">
    <property type="entry name" value="Ligase_CoA"/>
    <property type="match status" value="1"/>
</dbReference>
<dbReference type="PIRSF" id="PIRSF001553">
    <property type="entry name" value="SucCS_alpha"/>
    <property type="match status" value="1"/>
</dbReference>
<dbReference type="PRINTS" id="PR01798">
    <property type="entry name" value="SCOASYNTHASE"/>
</dbReference>
<dbReference type="SMART" id="SM00881">
    <property type="entry name" value="CoA_binding"/>
    <property type="match status" value="1"/>
</dbReference>
<dbReference type="SUPFAM" id="SSF51735">
    <property type="entry name" value="NAD(P)-binding Rossmann-fold domains"/>
    <property type="match status" value="1"/>
</dbReference>
<dbReference type="SUPFAM" id="SSF52210">
    <property type="entry name" value="Succinyl-CoA synthetase domains"/>
    <property type="match status" value="1"/>
</dbReference>
<dbReference type="PROSITE" id="PS01216">
    <property type="entry name" value="SUCCINYL_COA_LIG_1"/>
    <property type="match status" value="1"/>
</dbReference>
<dbReference type="PROSITE" id="PS00399">
    <property type="entry name" value="SUCCINYL_COA_LIG_2"/>
    <property type="match status" value="1"/>
</dbReference>
<proteinExistence type="evidence at protein level"/>
<gene>
    <name evidence="3 10" type="primary">SUCLG1</name>
</gene>
<name>SUCA_HUMAN</name>
<organism>
    <name type="scientific">Homo sapiens</name>
    <name type="common">Human</name>
    <dbReference type="NCBI Taxonomy" id="9606"/>
    <lineage>
        <taxon>Eukaryota</taxon>
        <taxon>Metazoa</taxon>
        <taxon>Chordata</taxon>
        <taxon>Craniata</taxon>
        <taxon>Vertebrata</taxon>
        <taxon>Euteleostomi</taxon>
        <taxon>Mammalia</taxon>
        <taxon>Eutheria</taxon>
        <taxon>Euarchontoglires</taxon>
        <taxon>Primates</taxon>
        <taxon>Haplorrhini</taxon>
        <taxon>Catarrhini</taxon>
        <taxon>Hominidae</taxon>
        <taxon>Homo</taxon>
    </lineage>
</organism>
<reference key="1">
    <citation type="journal article" date="2005" name="Nature">
        <title>Generation and annotation of the DNA sequences of human chromosomes 2 and 4.</title>
        <authorList>
            <person name="Hillier L.W."/>
            <person name="Graves T.A."/>
            <person name="Fulton R.S."/>
            <person name="Fulton L.A."/>
            <person name="Pepin K.H."/>
            <person name="Minx P."/>
            <person name="Wagner-McPherson C."/>
            <person name="Layman D."/>
            <person name="Wylie K."/>
            <person name="Sekhon M."/>
            <person name="Becker M.C."/>
            <person name="Fewell G.A."/>
            <person name="Delehaunty K.D."/>
            <person name="Miner T.L."/>
            <person name="Nash W.E."/>
            <person name="Kremitzki C."/>
            <person name="Oddy L."/>
            <person name="Du H."/>
            <person name="Sun H."/>
            <person name="Bradshaw-Cordum H."/>
            <person name="Ali J."/>
            <person name="Carter J."/>
            <person name="Cordes M."/>
            <person name="Harris A."/>
            <person name="Isak A."/>
            <person name="van Brunt A."/>
            <person name="Nguyen C."/>
            <person name="Du F."/>
            <person name="Courtney L."/>
            <person name="Kalicki J."/>
            <person name="Ozersky P."/>
            <person name="Abbott S."/>
            <person name="Armstrong J."/>
            <person name="Belter E.A."/>
            <person name="Caruso L."/>
            <person name="Cedroni M."/>
            <person name="Cotton M."/>
            <person name="Davidson T."/>
            <person name="Desai A."/>
            <person name="Elliott G."/>
            <person name="Erb T."/>
            <person name="Fronick C."/>
            <person name="Gaige T."/>
            <person name="Haakenson W."/>
            <person name="Haglund K."/>
            <person name="Holmes A."/>
            <person name="Harkins R."/>
            <person name="Kim K."/>
            <person name="Kruchowski S.S."/>
            <person name="Strong C.M."/>
            <person name="Grewal N."/>
            <person name="Goyea E."/>
            <person name="Hou S."/>
            <person name="Levy A."/>
            <person name="Martinka S."/>
            <person name="Mead K."/>
            <person name="McLellan M.D."/>
            <person name="Meyer R."/>
            <person name="Randall-Maher J."/>
            <person name="Tomlinson C."/>
            <person name="Dauphin-Kohlberg S."/>
            <person name="Kozlowicz-Reilly A."/>
            <person name="Shah N."/>
            <person name="Swearengen-Shahid S."/>
            <person name="Snider J."/>
            <person name="Strong J.T."/>
            <person name="Thompson J."/>
            <person name="Yoakum M."/>
            <person name="Leonard S."/>
            <person name="Pearman C."/>
            <person name="Trani L."/>
            <person name="Radionenko M."/>
            <person name="Waligorski J.E."/>
            <person name="Wang C."/>
            <person name="Rock S.M."/>
            <person name="Tin-Wollam A.-M."/>
            <person name="Maupin R."/>
            <person name="Latreille P."/>
            <person name="Wendl M.C."/>
            <person name="Yang S.-P."/>
            <person name="Pohl C."/>
            <person name="Wallis J.W."/>
            <person name="Spieth J."/>
            <person name="Bieri T.A."/>
            <person name="Berkowicz N."/>
            <person name="Nelson J.O."/>
            <person name="Osborne J."/>
            <person name="Ding L."/>
            <person name="Meyer R."/>
            <person name="Sabo A."/>
            <person name="Shotland Y."/>
            <person name="Sinha P."/>
            <person name="Wohldmann P.E."/>
            <person name="Cook L.L."/>
            <person name="Hickenbotham M.T."/>
            <person name="Eldred J."/>
            <person name="Williams D."/>
            <person name="Jones T.A."/>
            <person name="She X."/>
            <person name="Ciccarelli F.D."/>
            <person name="Izaurralde E."/>
            <person name="Taylor J."/>
            <person name="Schmutz J."/>
            <person name="Myers R.M."/>
            <person name="Cox D.R."/>
            <person name="Huang X."/>
            <person name="McPherson J.D."/>
            <person name="Mardis E.R."/>
            <person name="Clifton S.W."/>
            <person name="Warren W.C."/>
            <person name="Chinwalla A.T."/>
            <person name="Eddy S.R."/>
            <person name="Marra M.A."/>
            <person name="Ovcharenko I."/>
            <person name="Furey T.S."/>
            <person name="Miller W."/>
            <person name="Eichler E.E."/>
            <person name="Bork P."/>
            <person name="Suyama M."/>
            <person name="Torrents D."/>
            <person name="Waterston R.H."/>
            <person name="Wilson R.K."/>
        </authorList>
    </citation>
    <scope>NUCLEOTIDE SEQUENCE [LARGE SCALE GENOMIC DNA]</scope>
</reference>
<reference key="2">
    <citation type="journal article" date="2004" name="Genome Res.">
        <title>The status, quality, and expansion of the NIH full-length cDNA project: the Mammalian Gene Collection (MGC).</title>
        <authorList>
            <consortium name="The MGC Project Team"/>
        </authorList>
    </citation>
    <scope>NUCLEOTIDE SEQUENCE [LARGE SCALE MRNA] OF 3-346</scope>
    <source>
        <tissue>Lung</tissue>
    </source>
</reference>
<reference key="3">
    <citation type="submission" date="2000-07" db="EMBL/GenBank/DDBJ databases">
        <title>Sequence of the alpha subunit of succinyl-CoA synthetase in human.</title>
        <authorList>
            <person name="Tews K.N."/>
            <person name="Mehus J.G."/>
            <person name="Johnson J.D."/>
            <person name="Milavetz B.I."/>
            <person name="Lambeth D.O."/>
        </authorList>
    </citation>
    <scope>NUCLEOTIDE SEQUENCE [MRNA] OF 4-346</scope>
</reference>
<reference key="4">
    <citation type="journal article" date="1997" name="Biochim. Biophys. Acta">
        <title>The molecular basis for cross-reaction anti-dystrophin antibody with alpha-actinin.</title>
        <authorList>
            <person name="James M."/>
            <person name="Man N.T."/>
            <person name="Edwards Y.H."/>
            <person name="Morris G.E."/>
        </authorList>
    </citation>
    <scope>NUCLEOTIDE SEQUENCE [MRNA] OF 12-145</scope>
    <source>
        <tissue>Brain</tissue>
        <tissue>Skeletal muscle</tissue>
    </source>
</reference>
<reference key="5">
    <citation type="journal article" date="2007" name="Am. J. Hum. Genet.">
        <title>Deficiency of the alpha subunit of succinate-coenzyme A ligase causes fatal infantile lactic acidosis with mitochondrial DNA depletion.</title>
        <authorList>
            <person name="Ostergaard E."/>
            <person name="Christensen E."/>
            <person name="Kristensen E."/>
            <person name="Mogensen B."/>
            <person name="Duno M."/>
            <person name="Shoubridge E.A."/>
            <person name="Wibrand F."/>
        </authorList>
    </citation>
    <scope>INVOLVEMENT IN MTDPS9</scope>
</reference>
<reference key="6">
    <citation type="journal article" date="2009" name="Science">
        <title>Lysine acetylation targets protein complexes and co-regulates major cellular functions.</title>
        <authorList>
            <person name="Choudhary C."/>
            <person name="Kumar C."/>
            <person name="Gnad F."/>
            <person name="Nielsen M.L."/>
            <person name="Rehman M."/>
            <person name="Walther T.C."/>
            <person name="Olsen J.V."/>
            <person name="Mann M."/>
        </authorList>
    </citation>
    <scope>ACETYLATION [LARGE SCALE ANALYSIS] AT LYS-54</scope>
    <scope>IDENTIFICATION BY MASS SPECTROMETRY [LARGE SCALE ANALYSIS]</scope>
</reference>
<reference key="7">
    <citation type="journal article" date="2011" name="BMC Syst. Biol.">
        <title>Initial characterization of the human central proteome.</title>
        <authorList>
            <person name="Burkard T.R."/>
            <person name="Planyavsky M."/>
            <person name="Kaupe I."/>
            <person name="Breitwieser F.P."/>
            <person name="Buerckstuemmer T."/>
            <person name="Bennett K.L."/>
            <person name="Superti-Furga G."/>
            <person name="Colinge J."/>
        </authorList>
    </citation>
    <scope>IDENTIFICATION BY MASS SPECTROMETRY [LARGE SCALE ANALYSIS]</scope>
</reference>
<reference key="8">
    <citation type="journal article" date="2014" name="J. Proteomics">
        <title>An enzyme assisted RP-RPLC approach for in-depth analysis of human liver phosphoproteome.</title>
        <authorList>
            <person name="Bian Y."/>
            <person name="Song C."/>
            <person name="Cheng K."/>
            <person name="Dong M."/>
            <person name="Wang F."/>
            <person name="Huang J."/>
            <person name="Sun D."/>
            <person name="Wang L."/>
            <person name="Ye M."/>
            <person name="Zou H."/>
        </authorList>
    </citation>
    <scope>IDENTIFICATION BY MASS SPECTROMETRY [LARGE SCALE ANALYSIS]</scope>
    <source>
        <tissue>Liver</tissue>
    </source>
</reference>
<reference key="9">
    <citation type="journal article" date="2015" name="Proteomics">
        <title>N-terminome analysis of the human mitochondrial proteome.</title>
        <authorList>
            <person name="Vaca Jacome A.S."/>
            <person name="Rabilloud T."/>
            <person name="Schaeffer-Reiss C."/>
            <person name="Rompais M."/>
            <person name="Ayoub D."/>
            <person name="Lane L."/>
            <person name="Bairoch A."/>
            <person name="Van Dorsselaer A."/>
            <person name="Carapito C."/>
        </authorList>
    </citation>
    <scope>IDENTIFICATION BY MASS SPECTROMETRY [LARGE SCALE ANALYSIS]</scope>
</reference>
<reference key="10">
    <citation type="journal article" date="2021" name="Blood Adv.">
        <title>The immunometabolite itaconate inhibits heme synthesis and remodels cellular metabolism in erythroid precursors.</title>
        <authorList>
            <person name="Marcero J.R."/>
            <person name="Cox J.E."/>
            <person name="Bergonia H.A."/>
            <person name="Medlock A.E."/>
            <person name="Phillips J.D."/>
            <person name="Dailey H.A."/>
        </authorList>
    </citation>
    <scope>FUNCTION</scope>
    <scope>CATALYTIC ACTIVITY</scope>
    <scope>ACTIVITY REGULATION</scope>
</reference>
<reference key="11">
    <citation type="journal article" date="2010" name="Eur. J. Pediatr.">
        <title>A novel missense mutation in SUCLG1 associated with mitochondrial DNA depletion, encephalomyopathic form, with methylmalonic aciduria.</title>
        <authorList>
            <person name="Ostergaard E."/>
            <person name="Schwartz M."/>
            <person name="Batbayli M."/>
            <person name="Christensen E."/>
            <person name="Hjalmarson O."/>
            <person name="Kollberg G."/>
            <person name="Holme E."/>
        </authorList>
    </citation>
    <scope>VARIANT MTDPS9 ALA-85</scope>
</reference>
<reference key="12">
    <citation type="journal article" date="2010" name="J. Med. Genet.">
        <title>The severity of phenotype linked to SUCLG1 mutations could be correlated with residual amount of SUCLG1 protein.</title>
        <authorList>
            <person name="Rouzier C."/>
            <person name="Le Guedard-Mereuze S."/>
            <person name="Fragaki K."/>
            <person name="Serre V."/>
            <person name="Miro J."/>
            <person name="Tuffery-Giraud S."/>
            <person name="Chaussenot A."/>
            <person name="Bannwarth S."/>
            <person name="Caruba C."/>
            <person name="Ostergaard E."/>
            <person name="Pellissier J.F."/>
            <person name="Richelme C."/>
            <person name="Espil C."/>
            <person name="Chabrol B."/>
            <person name="Paquis-Flucklinger V."/>
        </authorList>
    </citation>
    <scope>VARIANT MTDPS9 ARG-170</scope>
</reference>
<reference key="13">
    <citation type="journal article" date="2010" name="Pediatr. Res.">
        <title>Succinyl-CoA ligase deficiency: a mitochondrial hepatoencephalomyopathy.</title>
        <authorList>
            <person name="Van Hove J.L."/>
            <person name="Saenz M.S."/>
            <person name="Thomas J.A."/>
            <person name="Gallagher R.C."/>
            <person name="Lovell M.A."/>
            <person name="Fenton L.Z."/>
            <person name="Shanske S."/>
            <person name="Myers S.M."/>
            <person name="Wanders R.J."/>
            <person name="Ruiter J."/>
            <person name="Turkenburg M."/>
            <person name="Waterham H.R."/>
        </authorList>
    </citation>
    <scope>VARIANT MTDPS9 LEU-14</scope>
</reference>
<reference key="14">
    <citation type="journal article" date="2016" name="J. Med. Genet.">
        <title>Homozygous missense mutation in the LMAN2L gene segregates with intellectual disability in a large consanguineous Pakistani family.</title>
        <authorList>
            <person name="Rafiullah R."/>
            <person name="Aslamkhan M."/>
            <person name="Paramasivam N."/>
            <person name="Thiel C."/>
            <person name="Mustafa G."/>
            <person name="Wiemann S."/>
            <person name="Schlesner M."/>
            <person name="Wade R.C."/>
            <person name="Rappold G.A."/>
            <person name="Berkel S."/>
        </authorList>
    </citation>
    <scope>VARIANT ALA-37</scope>
</reference>
<comment type="function">
    <text evidence="3 9">Succinyl-CoA synthetase functions in the citric acid cycle (TCA), coupling the hydrolysis of succinyl-CoA to the synthesis of either ATP or GTP and thus represents the only step of substrate-level phosphorylation in the TCA. The alpha subunit of the enzyme binds the substrates coenzyme A and phosphate, while succinate binding and specificity for either ATP or GTP is provided by different beta subunits.</text>
</comment>
<comment type="catalytic activity">
    <reaction evidence="3 9">
        <text>succinate + ATP + CoA = succinyl-CoA + ADP + phosphate</text>
        <dbReference type="Rhea" id="RHEA:17661"/>
        <dbReference type="ChEBI" id="CHEBI:30031"/>
        <dbReference type="ChEBI" id="CHEBI:30616"/>
        <dbReference type="ChEBI" id="CHEBI:43474"/>
        <dbReference type="ChEBI" id="CHEBI:57287"/>
        <dbReference type="ChEBI" id="CHEBI:57292"/>
        <dbReference type="ChEBI" id="CHEBI:456216"/>
        <dbReference type="EC" id="6.2.1.5"/>
    </reaction>
</comment>
<comment type="catalytic activity">
    <reaction evidence="3">
        <text>GTP + succinate + CoA = succinyl-CoA + GDP + phosphate</text>
        <dbReference type="Rhea" id="RHEA:22120"/>
        <dbReference type="ChEBI" id="CHEBI:30031"/>
        <dbReference type="ChEBI" id="CHEBI:37565"/>
        <dbReference type="ChEBI" id="CHEBI:43474"/>
        <dbReference type="ChEBI" id="CHEBI:57287"/>
        <dbReference type="ChEBI" id="CHEBI:57292"/>
        <dbReference type="ChEBI" id="CHEBI:58189"/>
        <dbReference type="EC" id="6.2.1.4"/>
    </reaction>
</comment>
<comment type="activity regulation">
    <text evidence="9">Inhibited by itaconate.</text>
</comment>
<comment type="pathway">
    <text evidence="3">Carbohydrate metabolism; tricarboxylic acid cycle; succinate from succinyl-CoA (ligase route): step 1/1.</text>
</comment>
<comment type="subunit">
    <text evidence="3">Heterodimer of an alpha and a beta subunit. Different beta subunits determine nucleotide specificity. Together with the ATP-specific beta subunit SUCLA2, forms an ADP-forming succinyl-CoA synthetase (A-SCS). Together with the GTP-specific beta subunit SUCLG2 forms a GDP-forming succinyl-CoA synthetase (G-SCS).</text>
</comment>
<comment type="interaction">
    <interactant intactId="EBI-1237145">
        <id>P53597</id>
    </interactant>
    <interactant intactId="EBI-2511878">
        <id>Q96I99</id>
        <label>SUCLG2</label>
    </interactant>
    <organismsDiffer>false</organismsDiffer>
    <experiments>3</experiments>
</comment>
<comment type="subcellular location">
    <subcellularLocation>
        <location evidence="3">Mitochondrion</location>
    </subcellularLocation>
</comment>
<comment type="disease" evidence="4 5 6 7">
    <disease id="DI-01609">
        <name>Mitochondrial DNA depletion syndrome 9</name>
        <acronym>MTDPS9</acronym>
        <description>A severe disorder due to mitochondrial dysfunction. It is characterized by infantile onset of hypotonia, lactic acidosis, severe psychomotor retardation, progressive neurologic deterioration, and excretion of methylmalonic acid.</description>
        <dbReference type="MIM" id="245400"/>
    </disease>
    <text>The disease is caused by variants affecting the gene represented in this entry.</text>
</comment>
<comment type="similarity">
    <text evidence="3">Belongs to the succinate/malate CoA ligase alpha subunit family.</text>
</comment>
<comment type="sequence caution" evidence="11">
    <conflict type="erroneous initiation">
        <sequence resource="EMBL-CDS" id="AAD17940"/>
    </conflict>
    <text>Truncated N-terminus.</text>
</comment>
<comment type="sequence caution" evidence="11">
    <conflict type="erroneous initiation">
        <sequence resource="EMBL-CDS" id="AAH00504"/>
    </conflict>
    <text>Truncated N-terminus.</text>
</comment>
<comment type="sequence caution" evidence="11">
    <conflict type="erroneous initiation">
        <sequence resource="EMBL-CDS" id="CAA92426"/>
    </conflict>
    <text>Truncated N-terminus.</text>
</comment>
<evidence type="ECO:0000250" key="1"/>
<evidence type="ECO:0000250" key="2">
    <source>
        <dbReference type="UniProtKB" id="Q9WUM5"/>
    </source>
</evidence>
<evidence type="ECO:0000255" key="3">
    <source>
        <dbReference type="HAMAP-Rule" id="MF_03222"/>
    </source>
</evidence>
<evidence type="ECO:0000269" key="4">
    <source>
    </source>
</evidence>
<evidence type="ECO:0000269" key="5">
    <source>
    </source>
</evidence>
<evidence type="ECO:0000269" key="6">
    <source>
    </source>
</evidence>
<evidence type="ECO:0000269" key="7">
    <source>
    </source>
</evidence>
<evidence type="ECO:0000269" key="8">
    <source>
    </source>
</evidence>
<evidence type="ECO:0000269" key="9">
    <source>
    </source>
</evidence>
<evidence type="ECO:0000303" key="10">
    <source>
    </source>
</evidence>
<evidence type="ECO:0000305" key="11"/>
<evidence type="ECO:0007744" key="12">
    <source>
    </source>
</evidence>
<evidence type="ECO:0007829" key="13">
    <source>
        <dbReference type="PDB" id="6WCV"/>
    </source>
</evidence>
<evidence type="ECO:0007829" key="14">
    <source>
        <dbReference type="PDB" id="7MSR"/>
    </source>
</evidence>
<evidence type="ECO:0007829" key="15">
    <source>
        <dbReference type="PDB" id="7MSS"/>
    </source>
</evidence>
<sequence>MTATLAAAADIATMVSGSSGLAAARLLSRSFLLPQNGIRHCSYTASRQHLYVDKNTKIICQGFTGKQGTFHSQQALEYGTKLVGGTTPGKGGQTHLGLPVFNTVKEAKEQTGATASVIYVPPPFAAAAINEAIEAEIPLVVCITEGIPQQDMVRVKHKLLRQEKTRLIGPNCPGVINPGECKIGIMPGHIHKKGRIGIVSRSGTLTYEAVHQTTQVGLGQSLCVGIGGDPFNGTDFIDCLEIFLNDSATEGIILIGEIGGNAEENAAEFLKQHNSGPNSKPVVSFIAGLTAPPGRRMGHAGAIIAGGKGGAKEKISALQSAGVVVSMSPAQLGTTIYKEFEKRKML</sequence>
<feature type="transit peptide" description="Mitochondrion" evidence="1">
    <location>
        <begin position="1"/>
        <end position="40"/>
    </location>
</feature>
<feature type="chain" id="PRO_0000033340" description="Succinate--CoA ligase [ADP/GDP-forming] subunit alpha, mitochondrial">
    <location>
        <begin position="41"/>
        <end position="346"/>
    </location>
</feature>
<feature type="active site" description="Tele-phosphohistidine intermediate" evidence="3">
    <location>
        <position position="299"/>
    </location>
</feature>
<feature type="binding site" evidence="3">
    <location>
        <begin position="64"/>
        <end position="67"/>
    </location>
    <ligand>
        <name>CoA</name>
        <dbReference type="ChEBI" id="CHEBI:57287"/>
    </ligand>
</feature>
<feature type="binding site" evidence="3">
    <location>
        <position position="90"/>
    </location>
    <ligand>
        <name>CoA</name>
        <dbReference type="ChEBI" id="CHEBI:57287"/>
    </ligand>
</feature>
<feature type="binding site" evidence="3">
    <location>
        <begin position="143"/>
        <end position="145"/>
    </location>
    <ligand>
        <name>CoA</name>
        <dbReference type="ChEBI" id="CHEBI:57287"/>
    </ligand>
</feature>
<feature type="binding site" evidence="3">
    <location>
        <position position="207"/>
    </location>
    <ligand>
        <name>substrate</name>
        <note>ligand shared with subunit beta</note>
    </ligand>
</feature>
<feature type="modified residue" description="N6-acetyllysine" evidence="12">
    <location>
        <position position="54"/>
    </location>
</feature>
<feature type="modified residue" description="N6-acetyllysine; alternate" evidence="2">
    <location>
        <position position="57"/>
    </location>
</feature>
<feature type="modified residue" description="N6-succinyllysine; alternate" evidence="2">
    <location>
        <position position="57"/>
    </location>
</feature>
<feature type="modified residue" description="N6-acetyllysine; alternate" evidence="2">
    <location>
        <position position="66"/>
    </location>
</feature>
<feature type="modified residue" description="N6-succinyllysine; alternate" evidence="2">
    <location>
        <position position="66"/>
    </location>
</feature>
<feature type="modified residue" description="N6-acetyllysine" evidence="2">
    <location>
        <position position="81"/>
    </location>
</feature>
<feature type="modified residue" description="N6-acetyllysine" evidence="2">
    <location>
        <position position="105"/>
    </location>
</feature>
<feature type="modified residue" description="N6-succinyllysine" evidence="2">
    <location>
        <position position="338"/>
    </location>
</feature>
<feature type="sequence variant" id="VAR_065120" description="In MTDPS9; with progressive liver disease and recurrent hepatic failure; dbSNP:rs796052053." evidence="6">
    <original>M</original>
    <variation>L</variation>
    <location>
        <position position="14"/>
    </location>
</feature>
<feature type="sequence variant" id="VAR_076432" description="In dbSNP:rs369610897." evidence="8">
    <original>G</original>
    <variation>A</variation>
    <location>
        <position position="37"/>
    </location>
</feature>
<feature type="sequence variant" id="VAR_065157" description="In MTDPS9; dbSNP:rs267607097." evidence="5">
    <original>G</original>
    <variation>A</variation>
    <location>
        <position position="85"/>
    </location>
</feature>
<feature type="sequence variant" id="VAR_065121" description="In MTDPS9; dbSNP:rs267607099." evidence="7">
    <original>P</original>
    <variation>R</variation>
    <location>
        <position position="170"/>
    </location>
</feature>
<feature type="sequence conflict" description="In Ref. 4; CAA92426." evidence="11" ref="4">
    <original>S</original>
    <variation>N</variation>
    <location>
        <position position="19"/>
    </location>
</feature>
<feature type="sequence conflict" description="In Ref. 4; CAA92426." evidence="11" ref="4">
    <original>P</original>
    <variation>Q</variation>
    <location>
        <position position="34"/>
    </location>
</feature>
<feature type="sequence conflict" description="In Ref. 4; CAA92426." evidence="11" ref="4">
    <original>R</original>
    <variation>Q</variation>
    <location>
        <position position="39"/>
    </location>
</feature>
<feature type="sequence conflict" description="In Ref. 3; AAD17940." evidence="11" ref="3">
    <original>T</original>
    <variation>L</variation>
    <location>
        <position position="87"/>
    </location>
</feature>
<feature type="helix" evidence="13">
    <location>
        <begin position="43"/>
        <end position="50"/>
    </location>
</feature>
<feature type="strand" evidence="13">
    <location>
        <begin position="58"/>
        <end position="61"/>
    </location>
</feature>
<feature type="turn" evidence="13">
    <location>
        <begin position="62"/>
        <end position="64"/>
    </location>
</feature>
<feature type="helix" evidence="13">
    <location>
        <begin position="66"/>
        <end position="78"/>
    </location>
</feature>
<feature type="strand" evidence="13">
    <location>
        <begin position="82"/>
        <end position="86"/>
    </location>
</feature>
<feature type="strand" evidence="13">
    <location>
        <begin position="98"/>
        <end position="102"/>
    </location>
</feature>
<feature type="helix" evidence="13">
    <location>
        <begin position="104"/>
        <end position="111"/>
    </location>
</feature>
<feature type="strand" evidence="13">
    <location>
        <begin position="115"/>
        <end position="118"/>
    </location>
</feature>
<feature type="helix" evidence="13">
    <location>
        <begin position="122"/>
        <end position="134"/>
    </location>
</feature>
<feature type="strand" evidence="13">
    <location>
        <begin position="138"/>
        <end position="142"/>
    </location>
</feature>
<feature type="helix" evidence="13">
    <location>
        <begin position="149"/>
        <end position="160"/>
    </location>
</feature>
<feature type="strand" evidence="13">
    <location>
        <begin position="166"/>
        <end position="168"/>
    </location>
</feature>
<feature type="strand" evidence="14">
    <location>
        <begin position="170"/>
        <end position="172"/>
    </location>
</feature>
<feature type="strand" evidence="13">
    <location>
        <begin position="174"/>
        <end position="177"/>
    </location>
</feature>
<feature type="turn" evidence="13">
    <location>
        <begin position="178"/>
        <end position="180"/>
    </location>
</feature>
<feature type="strand" evidence="13">
    <location>
        <begin position="181"/>
        <end position="186"/>
    </location>
</feature>
<feature type="helix" evidence="13">
    <location>
        <begin position="188"/>
        <end position="190"/>
    </location>
</feature>
<feature type="strand" evidence="13">
    <location>
        <begin position="193"/>
        <end position="201"/>
    </location>
</feature>
<feature type="helix" evidence="13">
    <location>
        <begin position="203"/>
        <end position="215"/>
    </location>
</feature>
<feature type="strand" evidence="13">
    <location>
        <begin position="220"/>
        <end position="225"/>
    </location>
</feature>
<feature type="helix" evidence="13">
    <location>
        <begin position="236"/>
        <end position="245"/>
    </location>
</feature>
<feature type="strand" evidence="13">
    <location>
        <begin position="251"/>
        <end position="261"/>
    </location>
</feature>
<feature type="helix" evidence="13">
    <location>
        <begin position="262"/>
        <end position="273"/>
    </location>
</feature>
<feature type="strand" evidence="13">
    <location>
        <begin position="274"/>
        <end position="276"/>
    </location>
</feature>
<feature type="strand" evidence="13">
    <location>
        <begin position="282"/>
        <end position="287"/>
    </location>
</feature>
<feature type="strand" evidence="15">
    <location>
        <begin position="298"/>
        <end position="301"/>
    </location>
</feature>
<feature type="helix" evidence="13">
    <location>
        <begin position="311"/>
        <end position="320"/>
    </location>
</feature>
<feature type="helix" evidence="13">
    <location>
        <begin position="329"/>
        <end position="331"/>
    </location>
</feature>
<feature type="helix" evidence="13">
    <location>
        <begin position="332"/>
        <end position="342"/>
    </location>
</feature>